<sequence length="94" mass="10307">MRTIAILAAILLFALLAQAKSLQETADEAATQEQPGEDDQDLAVSFEENGLSTLRASGSQARRTCRCRFGRCFRRESYSGSCNINGRISSLCCR</sequence>
<feature type="signal peptide" evidence="2">
    <location>
        <begin position="1"/>
        <end position="19"/>
    </location>
</feature>
<feature type="propeptide" id="PRO_0000006802" evidence="3">
    <location>
        <begin position="20"/>
        <end position="61"/>
    </location>
</feature>
<feature type="peptide" id="PRO_0000006803" description="Neutrophil defensin 6">
    <location>
        <begin position="62"/>
        <end position="94"/>
    </location>
</feature>
<feature type="peptide" id="PRO_0000006804" description="Neutrophil defensin 7">
    <location>
        <begin position="63"/>
        <end position="94"/>
    </location>
</feature>
<feature type="disulfide bond" evidence="1">
    <location>
        <begin position="65"/>
        <end position="93"/>
    </location>
</feature>
<feature type="disulfide bond" evidence="1">
    <location>
        <begin position="67"/>
        <end position="82"/>
    </location>
</feature>
<feature type="disulfide bond" evidence="1">
    <location>
        <begin position="72"/>
        <end position="92"/>
    </location>
</feature>
<protein>
    <recommendedName>
        <fullName>Neutrophil defensin 6</fullName>
    </recommendedName>
    <alternativeName>
        <fullName>RMAD-6</fullName>
    </alternativeName>
    <component>
        <recommendedName>
            <fullName>Neutrophil defensin 7</fullName>
        </recommendedName>
        <alternativeName>
            <fullName>RMAD-7</fullName>
        </alternativeName>
    </component>
</protein>
<dbReference type="EMBL" id="AF188272">
    <property type="protein sequence ID" value="AAF06316.1"/>
    <property type="molecule type" value="mRNA"/>
</dbReference>
<dbReference type="PIR" id="F59076">
    <property type="entry name" value="F59076"/>
</dbReference>
<dbReference type="PIR" id="G59076">
    <property type="entry name" value="G59076"/>
</dbReference>
<dbReference type="SMR" id="P82320"/>
<dbReference type="FunCoup" id="P82320">
    <property type="interactions" value="259"/>
</dbReference>
<dbReference type="InParanoid" id="P82320"/>
<dbReference type="Proteomes" id="UP000006718">
    <property type="component" value="Unassembled WGS sequence"/>
</dbReference>
<dbReference type="GO" id="GO:0005615">
    <property type="term" value="C:extracellular space"/>
    <property type="evidence" value="ECO:0000318"/>
    <property type="project" value="GO_Central"/>
</dbReference>
<dbReference type="GO" id="GO:0019731">
    <property type="term" value="P:antibacterial humoral response"/>
    <property type="evidence" value="ECO:0000318"/>
    <property type="project" value="GO_Central"/>
</dbReference>
<dbReference type="GO" id="GO:0061844">
    <property type="term" value="P:antimicrobial humoral immune response mediated by antimicrobial peptide"/>
    <property type="evidence" value="ECO:0000318"/>
    <property type="project" value="GO_Central"/>
</dbReference>
<dbReference type="GO" id="GO:0071222">
    <property type="term" value="P:cellular response to lipopolysaccharide"/>
    <property type="evidence" value="ECO:0000318"/>
    <property type="project" value="GO_Central"/>
</dbReference>
<dbReference type="GO" id="GO:0050832">
    <property type="term" value="P:defense response to fungus"/>
    <property type="evidence" value="ECO:0007669"/>
    <property type="project" value="UniProtKB-KW"/>
</dbReference>
<dbReference type="GO" id="GO:0050829">
    <property type="term" value="P:defense response to Gram-negative bacterium"/>
    <property type="evidence" value="ECO:0000318"/>
    <property type="project" value="GO_Central"/>
</dbReference>
<dbReference type="GO" id="GO:0050830">
    <property type="term" value="P:defense response to Gram-positive bacterium"/>
    <property type="evidence" value="ECO:0000318"/>
    <property type="project" value="GO_Central"/>
</dbReference>
<dbReference type="GO" id="GO:0051673">
    <property type="term" value="P:disruption of plasma membrane integrity in another organism"/>
    <property type="evidence" value="ECO:0000318"/>
    <property type="project" value="GO_Central"/>
</dbReference>
<dbReference type="GO" id="GO:0002227">
    <property type="term" value="P:innate immune response in mucosa"/>
    <property type="evidence" value="ECO:0000318"/>
    <property type="project" value="GO_Central"/>
</dbReference>
<dbReference type="GO" id="GO:0031640">
    <property type="term" value="P:killing of cells of another organism"/>
    <property type="evidence" value="ECO:0007669"/>
    <property type="project" value="UniProtKB-KW"/>
</dbReference>
<dbReference type="InterPro" id="IPR016327">
    <property type="entry name" value="Alpha-defensin"/>
</dbReference>
<dbReference type="InterPro" id="IPR006081">
    <property type="entry name" value="Alpha-defensin_C"/>
</dbReference>
<dbReference type="InterPro" id="IPR002366">
    <property type="entry name" value="Alpha-defensin_N"/>
</dbReference>
<dbReference type="PANTHER" id="PTHR11876">
    <property type="entry name" value="ALPHA-DEFENSIN 1"/>
    <property type="match status" value="1"/>
</dbReference>
<dbReference type="PANTHER" id="PTHR11876:SF6">
    <property type="entry name" value="DEFENSIN ALPHA 5"/>
    <property type="match status" value="1"/>
</dbReference>
<dbReference type="Pfam" id="PF00323">
    <property type="entry name" value="Defensin_1"/>
    <property type="match status" value="1"/>
</dbReference>
<dbReference type="Pfam" id="PF00879">
    <property type="entry name" value="Defensin_propep"/>
    <property type="match status" value="1"/>
</dbReference>
<dbReference type="PIRSF" id="PIRSF001875">
    <property type="entry name" value="Alpha-defensin"/>
    <property type="match status" value="1"/>
</dbReference>
<dbReference type="SMART" id="SM01418">
    <property type="entry name" value="Defensin_propep"/>
    <property type="match status" value="1"/>
</dbReference>
<dbReference type="SUPFAM" id="SSF57392">
    <property type="entry name" value="Defensin-like"/>
    <property type="match status" value="1"/>
</dbReference>
<dbReference type="PROSITE" id="PS00269">
    <property type="entry name" value="DEFENSIN"/>
    <property type="match status" value="1"/>
</dbReference>
<evidence type="ECO:0000250" key="1"/>
<evidence type="ECO:0000255" key="2"/>
<evidence type="ECO:0000269" key="3">
    <source>
    </source>
</evidence>
<evidence type="ECO:0000305" key="4"/>
<comment type="function">
    <text>Defensins 6 and 7 have bacteriostatic activity against Gram-positive bacteria S.aureus and L.monocytogenes and Gram-negative bacterium E.coli and antifungal activity against C.neoformans. Defensin 7 has microbicidial activity against Gram-positive bacteria S.aureus and L.monocytogenes.</text>
</comment>
<comment type="subcellular location">
    <subcellularLocation>
        <location>Secreted</location>
    </subcellularLocation>
</comment>
<comment type="mass spectrometry" mass="3898.0" method="MALDI" evidence="3">
    <molecule>Neutrophil defensin 6</molecule>
</comment>
<comment type="mass spectrometry" mass="3740.0" method="MALDI" evidence="3">
    <molecule>Neutrophil defensin 7</molecule>
</comment>
<comment type="similarity">
    <text evidence="4">Belongs to the alpha-defensin family.</text>
</comment>
<reference key="1">
    <citation type="journal article" date="1999" name="Infect. Immun.">
        <title>Isolation, characterization, cDNA cloning, and antimicrobial properties of two distinct subfamilies of alpha-defensins from rhesus macaque leukocytes.</title>
        <authorList>
            <person name="Tang Y.Q."/>
            <person name="Yuan J."/>
            <person name="Miller C.J."/>
            <person name="Selsted M.E."/>
        </authorList>
    </citation>
    <scope>NUCLEOTIDE SEQUENCE [MRNA]</scope>
    <scope>PROTEIN SEQUENCE OF 62-94</scope>
    <scope>MASS SPECTROMETRY</scope>
    <source>
        <tissue>Bone marrow</tissue>
        <tissue>Leukocyte</tissue>
    </source>
</reference>
<organism>
    <name type="scientific">Macaca mulatta</name>
    <name type="common">Rhesus macaque</name>
    <dbReference type="NCBI Taxonomy" id="9544"/>
    <lineage>
        <taxon>Eukaryota</taxon>
        <taxon>Metazoa</taxon>
        <taxon>Chordata</taxon>
        <taxon>Craniata</taxon>
        <taxon>Vertebrata</taxon>
        <taxon>Euteleostomi</taxon>
        <taxon>Mammalia</taxon>
        <taxon>Eutheria</taxon>
        <taxon>Euarchontoglires</taxon>
        <taxon>Primates</taxon>
        <taxon>Haplorrhini</taxon>
        <taxon>Catarrhini</taxon>
        <taxon>Cercopithecidae</taxon>
        <taxon>Cercopithecinae</taxon>
        <taxon>Macaca</taxon>
    </lineage>
</organism>
<keyword id="KW-0044">Antibiotic</keyword>
<keyword id="KW-0929">Antimicrobial</keyword>
<keyword id="KW-0211">Defensin</keyword>
<keyword id="KW-0903">Direct protein sequencing</keyword>
<keyword id="KW-1015">Disulfide bond</keyword>
<keyword id="KW-0295">Fungicide</keyword>
<keyword id="KW-1185">Reference proteome</keyword>
<keyword id="KW-0964">Secreted</keyword>
<keyword id="KW-0732">Signal</keyword>
<name>DEF6_MACMU</name>
<accession>P82320</accession>
<proteinExistence type="evidence at protein level"/>